<protein>
    <recommendedName>
        <fullName evidence="1">Cell division protein SepF</fullName>
    </recommendedName>
</protein>
<dbReference type="EMBL" id="CP000425">
    <property type="protein sequence ID" value="ABJ73539.1"/>
    <property type="molecule type" value="Genomic_DNA"/>
</dbReference>
<dbReference type="RefSeq" id="WP_011676878.1">
    <property type="nucleotide sequence ID" value="NC_008527.1"/>
</dbReference>
<dbReference type="SMR" id="Q02WY3"/>
<dbReference type="KEGG" id="llc:LACR_2060"/>
<dbReference type="HOGENOM" id="CLU_078499_2_0_9"/>
<dbReference type="Proteomes" id="UP000000240">
    <property type="component" value="Chromosome"/>
</dbReference>
<dbReference type="GO" id="GO:0005737">
    <property type="term" value="C:cytoplasm"/>
    <property type="evidence" value="ECO:0007669"/>
    <property type="project" value="UniProtKB-SubCell"/>
</dbReference>
<dbReference type="GO" id="GO:0000917">
    <property type="term" value="P:division septum assembly"/>
    <property type="evidence" value="ECO:0007669"/>
    <property type="project" value="UniProtKB-KW"/>
</dbReference>
<dbReference type="GO" id="GO:0043093">
    <property type="term" value="P:FtsZ-dependent cytokinesis"/>
    <property type="evidence" value="ECO:0007669"/>
    <property type="project" value="UniProtKB-UniRule"/>
</dbReference>
<dbReference type="Gene3D" id="3.30.110.150">
    <property type="entry name" value="SepF-like protein"/>
    <property type="match status" value="1"/>
</dbReference>
<dbReference type="HAMAP" id="MF_01197">
    <property type="entry name" value="SepF"/>
    <property type="match status" value="1"/>
</dbReference>
<dbReference type="InterPro" id="IPR023052">
    <property type="entry name" value="Cell_div_SepF"/>
</dbReference>
<dbReference type="InterPro" id="IPR007561">
    <property type="entry name" value="Cell_div_SepF/SepF-rel"/>
</dbReference>
<dbReference type="InterPro" id="IPR038594">
    <property type="entry name" value="SepF-like_sf"/>
</dbReference>
<dbReference type="PANTHER" id="PTHR35798">
    <property type="entry name" value="CELL DIVISION PROTEIN SEPF"/>
    <property type="match status" value="1"/>
</dbReference>
<dbReference type="PANTHER" id="PTHR35798:SF1">
    <property type="entry name" value="CELL DIVISION PROTEIN SEPF"/>
    <property type="match status" value="1"/>
</dbReference>
<dbReference type="Pfam" id="PF04472">
    <property type="entry name" value="SepF"/>
    <property type="match status" value="1"/>
</dbReference>
<name>SEPF_LACLS</name>
<accession>Q02WY3</accession>
<organism>
    <name type="scientific">Lactococcus lactis subsp. cremoris (strain SK11)</name>
    <dbReference type="NCBI Taxonomy" id="272622"/>
    <lineage>
        <taxon>Bacteria</taxon>
        <taxon>Bacillati</taxon>
        <taxon>Bacillota</taxon>
        <taxon>Bacilli</taxon>
        <taxon>Lactobacillales</taxon>
        <taxon>Streptococcaceae</taxon>
        <taxon>Lactococcus</taxon>
        <taxon>Lactococcus cremoris subsp. cremoris</taxon>
    </lineage>
</organism>
<proteinExistence type="inferred from homology"/>
<reference key="1">
    <citation type="journal article" date="2006" name="Proc. Natl. Acad. Sci. U.S.A.">
        <title>Comparative genomics of the lactic acid bacteria.</title>
        <authorList>
            <person name="Makarova K.S."/>
            <person name="Slesarev A."/>
            <person name="Wolf Y.I."/>
            <person name="Sorokin A."/>
            <person name="Mirkin B."/>
            <person name="Koonin E.V."/>
            <person name="Pavlov A."/>
            <person name="Pavlova N."/>
            <person name="Karamychev V."/>
            <person name="Polouchine N."/>
            <person name="Shakhova V."/>
            <person name="Grigoriev I."/>
            <person name="Lou Y."/>
            <person name="Rohksar D."/>
            <person name="Lucas S."/>
            <person name="Huang K."/>
            <person name="Goodstein D.M."/>
            <person name="Hawkins T."/>
            <person name="Plengvidhya V."/>
            <person name="Welker D."/>
            <person name="Hughes J."/>
            <person name="Goh Y."/>
            <person name="Benson A."/>
            <person name="Baldwin K."/>
            <person name="Lee J.-H."/>
            <person name="Diaz-Muniz I."/>
            <person name="Dosti B."/>
            <person name="Smeianov V."/>
            <person name="Wechter W."/>
            <person name="Barabote R."/>
            <person name="Lorca G."/>
            <person name="Altermann E."/>
            <person name="Barrangou R."/>
            <person name="Ganesan B."/>
            <person name="Xie Y."/>
            <person name="Rawsthorne H."/>
            <person name="Tamir D."/>
            <person name="Parker C."/>
            <person name="Breidt F."/>
            <person name="Broadbent J.R."/>
            <person name="Hutkins R."/>
            <person name="O'Sullivan D."/>
            <person name="Steele J."/>
            <person name="Unlu G."/>
            <person name="Saier M.H. Jr."/>
            <person name="Klaenhammer T."/>
            <person name="Richardson P."/>
            <person name="Kozyavkin S."/>
            <person name="Weimer B.C."/>
            <person name="Mills D.A."/>
        </authorList>
    </citation>
    <scope>NUCLEOTIDE SEQUENCE [LARGE SCALE GENOMIC DNA]</scope>
    <source>
        <strain>SK11</strain>
    </source>
</reference>
<evidence type="ECO:0000255" key="1">
    <source>
        <dbReference type="HAMAP-Rule" id="MF_01197"/>
    </source>
</evidence>
<evidence type="ECO:0000256" key="2">
    <source>
        <dbReference type="SAM" id="MobiDB-lite"/>
    </source>
</evidence>
<feature type="chain" id="PRO_0000334028" description="Cell division protein SepF">
    <location>
        <begin position="1"/>
        <end position="196"/>
    </location>
</feature>
<feature type="region of interest" description="Disordered" evidence="2">
    <location>
        <begin position="15"/>
        <end position="80"/>
    </location>
</feature>
<feature type="compositionally biased region" description="Polar residues" evidence="2">
    <location>
        <begin position="56"/>
        <end position="79"/>
    </location>
</feature>
<sequence length="196" mass="21894">MAFKDWMNNLRDYFVEDDEEFNEPTRPVQESRPTVASTPKPKVEERKVQADYQSRRPAQSTPKPQAQTAAPKRSASTFSKPMPEKIVQQQTVSQAQSLAATVSTIAIKEPRAYADIMESARIVKNGECVLVNFKFMGDAQARRSIDFMTGVVFTLDGDIQNVGGQIFLMTPANITVDAAKEMSILAGKNFESYDIY</sequence>
<keyword id="KW-0131">Cell cycle</keyword>
<keyword id="KW-0132">Cell division</keyword>
<keyword id="KW-0963">Cytoplasm</keyword>
<keyword id="KW-0717">Septation</keyword>
<gene>
    <name evidence="1" type="primary">sepF</name>
    <name type="ordered locus">LACR_2060</name>
</gene>
<comment type="function">
    <text evidence="1">Cell division protein that is part of the divisome complex and is recruited early to the Z-ring. Probably stimulates Z-ring formation, perhaps through the cross-linking of FtsZ protofilaments. Its function overlaps with FtsA.</text>
</comment>
<comment type="subunit">
    <text evidence="1">Homodimer. Interacts with FtsZ.</text>
</comment>
<comment type="subcellular location">
    <subcellularLocation>
        <location evidence="1">Cytoplasm</location>
    </subcellularLocation>
    <text evidence="1">Localizes to the division site, in a FtsZ-dependent manner.</text>
</comment>
<comment type="similarity">
    <text evidence="1">Belongs to the SepF family.</text>
</comment>